<reference key="1">
    <citation type="journal article" date="2006" name="Mol. Phylogenet. Evol.">
        <title>Dispersal and vicariance: the complex evolutionary history of boid snakes.</title>
        <authorList>
            <person name="Noonan B.P."/>
            <person name="Chippindale P.T."/>
        </authorList>
    </citation>
    <scope>NUCLEOTIDE SEQUENCE [GENOMIC DNA]</scope>
</reference>
<organism>
    <name type="scientific">Loxocemus bicolor</name>
    <name type="common">Mexican burrowing python</name>
    <dbReference type="NCBI Taxonomy" id="39078"/>
    <lineage>
        <taxon>Eukaryota</taxon>
        <taxon>Metazoa</taxon>
        <taxon>Chordata</taxon>
        <taxon>Craniata</taxon>
        <taxon>Vertebrata</taxon>
        <taxon>Euteleostomi</taxon>
        <taxon>Lepidosauria</taxon>
        <taxon>Squamata</taxon>
        <taxon>Bifurcata</taxon>
        <taxon>Unidentata</taxon>
        <taxon>Episquamata</taxon>
        <taxon>Toxicofera</taxon>
        <taxon>Serpentes</taxon>
        <taxon>Henophidia</taxon>
        <taxon>Loxocemidae</taxon>
        <taxon>Loxocemus</taxon>
    </lineage>
</organism>
<protein>
    <recommendedName>
        <fullName evidence="3">Neurotrophic factor BDNF precursor form</fullName>
        <shortName>proBDNF</shortName>
    </recommendedName>
    <alternativeName>
        <fullName>Brain-derived neurotrophic factor</fullName>
    </alternativeName>
    <component>
        <recommendedName>
            <fullName>Neurotrophic factor BDNF</fullName>
        </recommendedName>
    </component>
</protein>
<dbReference type="EMBL" id="DQ465573">
    <property type="protein sequence ID" value="ABF56548.1"/>
    <property type="molecule type" value="Genomic_DNA"/>
</dbReference>
<dbReference type="SMR" id="Q1HN33"/>
<dbReference type="GlyCosmos" id="Q1HN33">
    <property type="glycosylation" value="1 site, No reported glycans"/>
</dbReference>
<dbReference type="GO" id="GO:0030424">
    <property type="term" value="C:axon"/>
    <property type="evidence" value="ECO:0007669"/>
    <property type="project" value="TreeGrafter"/>
</dbReference>
<dbReference type="GO" id="GO:0030425">
    <property type="term" value="C:dendrite"/>
    <property type="evidence" value="ECO:0007669"/>
    <property type="project" value="TreeGrafter"/>
</dbReference>
<dbReference type="GO" id="GO:0005615">
    <property type="term" value="C:extracellular space"/>
    <property type="evidence" value="ECO:0007669"/>
    <property type="project" value="TreeGrafter"/>
</dbReference>
<dbReference type="GO" id="GO:0008021">
    <property type="term" value="C:synaptic vesicle"/>
    <property type="evidence" value="ECO:0007669"/>
    <property type="project" value="TreeGrafter"/>
</dbReference>
<dbReference type="GO" id="GO:0008083">
    <property type="term" value="F:growth factor activity"/>
    <property type="evidence" value="ECO:0007669"/>
    <property type="project" value="UniProtKB-KW"/>
</dbReference>
<dbReference type="GO" id="GO:0005163">
    <property type="term" value="F:nerve growth factor receptor binding"/>
    <property type="evidence" value="ECO:0007669"/>
    <property type="project" value="TreeGrafter"/>
</dbReference>
<dbReference type="GO" id="GO:0007169">
    <property type="term" value="P:cell surface receptor protein tyrosine kinase signaling pathway"/>
    <property type="evidence" value="ECO:0007669"/>
    <property type="project" value="TreeGrafter"/>
</dbReference>
<dbReference type="GO" id="GO:0050804">
    <property type="term" value="P:modulation of chemical synaptic transmission"/>
    <property type="evidence" value="ECO:0007669"/>
    <property type="project" value="TreeGrafter"/>
</dbReference>
<dbReference type="GO" id="GO:0043524">
    <property type="term" value="P:negative regulation of neuron apoptotic process"/>
    <property type="evidence" value="ECO:0007669"/>
    <property type="project" value="TreeGrafter"/>
</dbReference>
<dbReference type="GO" id="GO:0021675">
    <property type="term" value="P:nerve development"/>
    <property type="evidence" value="ECO:0007669"/>
    <property type="project" value="TreeGrafter"/>
</dbReference>
<dbReference type="GO" id="GO:0038180">
    <property type="term" value="P:nerve growth factor signaling pathway"/>
    <property type="evidence" value="ECO:0007669"/>
    <property type="project" value="TreeGrafter"/>
</dbReference>
<dbReference type="GO" id="GO:0048812">
    <property type="term" value="P:neuron projection morphogenesis"/>
    <property type="evidence" value="ECO:0007669"/>
    <property type="project" value="TreeGrafter"/>
</dbReference>
<dbReference type="FunFam" id="2.10.90.10:FF:000002">
    <property type="entry name" value="Brain-derived neurotrophic factor"/>
    <property type="match status" value="1"/>
</dbReference>
<dbReference type="Gene3D" id="2.10.90.10">
    <property type="entry name" value="Cystine-knot cytokines"/>
    <property type="match status" value="1"/>
</dbReference>
<dbReference type="InterPro" id="IPR020430">
    <property type="entry name" value="Brain-der_neurotrophic_factor"/>
</dbReference>
<dbReference type="InterPro" id="IPR029034">
    <property type="entry name" value="Cystine-knot_cytokine"/>
</dbReference>
<dbReference type="InterPro" id="IPR020408">
    <property type="entry name" value="Nerve_growth_factor-like"/>
</dbReference>
<dbReference type="InterPro" id="IPR002072">
    <property type="entry name" value="Nerve_growth_factor-rel"/>
</dbReference>
<dbReference type="InterPro" id="IPR019846">
    <property type="entry name" value="Nerve_growth_factor_CS"/>
</dbReference>
<dbReference type="PANTHER" id="PTHR11589:SF3">
    <property type="entry name" value="BRAIN-DERIVED NEUROTROPHIC FACTOR"/>
    <property type="match status" value="1"/>
</dbReference>
<dbReference type="PANTHER" id="PTHR11589">
    <property type="entry name" value="NERVE GROWTH FACTOR NGF -RELATED"/>
    <property type="match status" value="1"/>
</dbReference>
<dbReference type="Pfam" id="PF00243">
    <property type="entry name" value="NGF"/>
    <property type="match status" value="1"/>
</dbReference>
<dbReference type="PIRSF" id="PIRSF001789">
    <property type="entry name" value="NGF"/>
    <property type="match status" value="1"/>
</dbReference>
<dbReference type="PRINTS" id="PR01912">
    <property type="entry name" value="BDNFACTOR"/>
</dbReference>
<dbReference type="PRINTS" id="PR00268">
    <property type="entry name" value="NGF"/>
</dbReference>
<dbReference type="SMART" id="SM00140">
    <property type="entry name" value="NGF"/>
    <property type="match status" value="1"/>
</dbReference>
<dbReference type="SUPFAM" id="SSF57501">
    <property type="entry name" value="Cystine-knot cytokines"/>
    <property type="match status" value="1"/>
</dbReference>
<dbReference type="PROSITE" id="PS00248">
    <property type="entry name" value="NGF_1"/>
    <property type="match status" value="1"/>
</dbReference>
<dbReference type="PROSITE" id="PS50270">
    <property type="entry name" value="NGF_2"/>
    <property type="match status" value="1"/>
</dbReference>
<keyword id="KW-0165">Cleavage on pair of basic residues</keyword>
<keyword id="KW-1015">Disulfide bond</keyword>
<keyword id="KW-0325">Glycoprotein</keyword>
<keyword id="KW-0339">Growth factor</keyword>
<keyword id="KW-0964">Secreted</keyword>
<keyword id="KW-0732">Signal</keyword>
<accession>Q1HN33</accession>
<name>BDNF_LOXBI</name>
<proteinExistence type="inferred from homology"/>
<feature type="signal peptide" evidence="2">
    <location>
        <begin position="1" status="less than"/>
        <end position="5"/>
    </location>
</feature>
<feature type="propeptide" id="PRO_0000346691" evidence="1">
    <location>
        <begin position="6"/>
        <end position="114"/>
    </location>
</feature>
<feature type="chain" id="PRO_0000346692" description="Neurotrophic factor BDNF">
    <location>
        <begin position="115"/>
        <end position="219" status="greater than"/>
    </location>
</feature>
<feature type="glycosylation site" description="N-linked (GlcNAc...) asparagine" evidence="2">
    <location>
        <position position="107"/>
    </location>
</feature>
<feature type="disulfide bond" evidence="1">
    <location>
        <begin position="127"/>
        <end position="194"/>
    </location>
</feature>
<feature type="non-terminal residue">
    <location>
        <position position="1"/>
    </location>
</feature>
<feature type="non-terminal residue">
    <location>
        <position position="219"/>
    </location>
</feature>
<gene>
    <name type="primary">BDNF</name>
</gene>
<comment type="function">
    <text evidence="1">Promotes the survival of neuronal populations that are all located either in the central nervous system or directly connected to it.</text>
</comment>
<comment type="subcellular location">
    <subcellularLocation>
        <location evidence="1">Secreted</location>
    </subcellularLocation>
</comment>
<comment type="similarity">
    <text evidence="3">Belongs to the NGF-beta family.</text>
</comment>
<evidence type="ECO:0000250" key="1"/>
<evidence type="ECO:0000255" key="2"/>
<evidence type="ECO:0000305" key="3"/>
<sequence>SCMKAAPMKEVSIRGQGSLAYPGLRTQGNLETLSGPNDATRGLTSLADTFEHVIEELLDEQQVIQPSKENKDADLYSSRVMLSSQVPLEPPLLFLLEEYKNYLDAANMSMRVRRHSDPARRGELSVCDSTSEWVTAAEKKTAVDMSGATVTVLEKVPVPKGQLKQYFYETKCSSKGYAKEGCRGIDKRYWNSQCRTTQSYVRALTMDNKKRVGWRFIRI</sequence>